<comment type="similarity">
    <text evidence="1">Belongs to the bacterial ribosomal protein bL36 family.</text>
</comment>
<evidence type="ECO:0000255" key="1">
    <source>
        <dbReference type="HAMAP-Rule" id="MF_00251"/>
    </source>
</evidence>
<evidence type="ECO:0000305" key="2"/>
<evidence type="ECO:0007829" key="3">
    <source>
        <dbReference type="PDB" id="6WU9"/>
    </source>
</evidence>
<reference key="1">
    <citation type="journal article" date="2003" name="Science">
        <title>Role of mobile DNA in the evolution of vancomycin-resistant Enterococcus faecalis.</title>
        <authorList>
            <person name="Paulsen I.T."/>
            <person name="Banerjei L."/>
            <person name="Myers G.S.A."/>
            <person name="Nelson K.E."/>
            <person name="Seshadri R."/>
            <person name="Read T.D."/>
            <person name="Fouts D.E."/>
            <person name="Eisen J.A."/>
            <person name="Gill S.R."/>
            <person name="Heidelberg J.F."/>
            <person name="Tettelin H."/>
            <person name="Dodson R.J."/>
            <person name="Umayam L.A."/>
            <person name="Brinkac L.M."/>
            <person name="Beanan M.J."/>
            <person name="Daugherty S.C."/>
            <person name="DeBoy R.T."/>
            <person name="Durkin S.A."/>
            <person name="Kolonay J.F."/>
            <person name="Madupu R."/>
            <person name="Nelson W.C."/>
            <person name="Vamathevan J.J."/>
            <person name="Tran B."/>
            <person name="Upton J."/>
            <person name="Hansen T."/>
            <person name="Shetty J."/>
            <person name="Khouri H.M."/>
            <person name="Utterback T.R."/>
            <person name="Radune D."/>
            <person name="Ketchum K.A."/>
            <person name="Dougherty B.A."/>
            <person name="Fraser C.M."/>
        </authorList>
    </citation>
    <scope>NUCLEOTIDE SEQUENCE [LARGE SCALE GENOMIC DNA]</scope>
    <source>
        <strain>ATCC 700802 / V583</strain>
    </source>
</reference>
<name>RL36_ENTFA</name>
<feature type="chain" id="PRO_0000126186" description="Large ribosomal subunit protein bL36">
    <location>
        <begin position="1"/>
        <end position="38"/>
    </location>
</feature>
<feature type="strand" evidence="3">
    <location>
        <begin position="2"/>
        <end position="5"/>
    </location>
</feature>
<feature type="strand" evidence="3">
    <location>
        <begin position="11"/>
        <end position="13"/>
    </location>
</feature>
<feature type="strand" evidence="3">
    <location>
        <begin position="15"/>
        <end position="21"/>
    </location>
</feature>
<feature type="strand" evidence="3">
    <location>
        <begin position="23"/>
        <end position="26"/>
    </location>
</feature>
<feature type="helix" evidence="3">
    <location>
        <begin position="31"/>
        <end position="33"/>
    </location>
</feature>
<feature type="strand" evidence="3">
    <location>
        <begin position="35"/>
        <end position="37"/>
    </location>
</feature>
<organism>
    <name type="scientific">Enterococcus faecalis (strain ATCC 700802 / V583)</name>
    <dbReference type="NCBI Taxonomy" id="226185"/>
    <lineage>
        <taxon>Bacteria</taxon>
        <taxon>Bacillati</taxon>
        <taxon>Bacillota</taxon>
        <taxon>Bacilli</taxon>
        <taxon>Lactobacillales</taxon>
        <taxon>Enterococcaceae</taxon>
        <taxon>Enterococcus</taxon>
    </lineage>
</organism>
<accession>Q839E1</accession>
<protein>
    <recommendedName>
        <fullName evidence="1">Large ribosomal subunit protein bL36</fullName>
    </recommendedName>
    <alternativeName>
        <fullName evidence="2">50S ribosomal protein L36</fullName>
    </alternativeName>
</protein>
<gene>
    <name evidence="1" type="primary">rpmJ</name>
    <name type="ordered locus">EF_0230</name>
</gene>
<sequence>MKVRPSVKPMCEHCKVIRRKGRVMVICPANPKHKQRQG</sequence>
<proteinExistence type="evidence at protein level"/>
<dbReference type="EMBL" id="AE016830">
    <property type="protein sequence ID" value="AAO80098.1"/>
    <property type="molecule type" value="Genomic_DNA"/>
</dbReference>
<dbReference type="RefSeq" id="NP_814027.1">
    <property type="nucleotide sequence ID" value="NC_004668.1"/>
</dbReference>
<dbReference type="RefSeq" id="WP_002288710.1">
    <property type="nucleotide sequence ID" value="NZ_KE136524.1"/>
</dbReference>
<dbReference type="PDB" id="6WU9">
    <property type="method" value="EM"/>
    <property type="resolution" value="2.90 A"/>
    <property type="chains" value="6=1-38"/>
</dbReference>
<dbReference type="PDB" id="7P7Q">
    <property type="method" value="EM"/>
    <property type="resolution" value="2.40 A"/>
    <property type="chains" value="8=1-38"/>
</dbReference>
<dbReference type="PDB" id="7P7R">
    <property type="method" value="EM"/>
    <property type="resolution" value="2.90 A"/>
    <property type="chains" value="8=1-38"/>
</dbReference>
<dbReference type="PDBsum" id="6WU9"/>
<dbReference type="PDBsum" id="7P7Q"/>
<dbReference type="PDBsum" id="7P7R"/>
<dbReference type="EMDB" id="EMD-13241"/>
<dbReference type="EMDB" id="EMD-13242"/>
<dbReference type="SMR" id="Q839E1"/>
<dbReference type="STRING" id="226185.EF_0230"/>
<dbReference type="EnsemblBacteria" id="AAO80098">
    <property type="protein sequence ID" value="AAO80098"/>
    <property type="gene ID" value="EF_0230"/>
</dbReference>
<dbReference type="GeneID" id="93223004"/>
<dbReference type="KEGG" id="efa:EF0230"/>
<dbReference type="PATRIC" id="fig|226185.45.peg.37"/>
<dbReference type="eggNOG" id="COG0257">
    <property type="taxonomic scope" value="Bacteria"/>
</dbReference>
<dbReference type="HOGENOM" id="CLU_135723_6_2_9"/>
<dbReference type="PRO" id="PR:Q839E1"/>
<dbReference type="Proteomes" id="UP000001415">
    <property type="component" value="Chromosome"/>
</dbReference>
<dbReference type="GO" id="GO:0005737">
    <property type="term" value="C:cytoplasm"/>
    <property type="evidence" value="ECO:0007669"/>
    <property type="project" value="UniProtKB-ARBA"/>
</dbReference>
<dbReference type="GO" id="GO:1990904">
    <property type="term" value="C:ribonucleoprotein complex"/>
    <property type="evidence" value="ECO:0007669"/>
    <property type="project" value="UniProtKB-KW"/>
</dbReference>
<dbReference type="GO" id="GO:0005840">
    <property type="term" value="C:ribosome"/>
    <property type="evidence" value="ECO:0007669"/>
    <property type="project" value="UniProtKB-KW"/>
</dbReference>
<dbReference type="GO" id="GO:0003735">
    <property type="term" value="F:structural constituent of ribosome"/>
    <property type="evidence" value="ECO:0007669"/>
    <property type="project" value="InterPro"/>
</dbReference>
<dbReference type="GO" id="GO:0006412">
    <property type="term" value="P:translation"/>
    <property type="evidence" value="ECO:0007669"/>
    <property type="project" value="UniProtKB-UniRule"/>
</dbReference>
<dbReference type="HAMAP" id="MF_00251">
    <property type="entry name" value="Ribosomal_bL36"/>
    <property type="match status" value="1"/>
</dbReference>
<dbReference type="InterPro" id="IPR000473">
    <property type="entry name" value="Ribosomal_bL36"/>
</dbReference>
<dbReference type="InterPro" id="IPR035977">
    <property type="entry name" value="Ribosomal_bL36_sp"/>
</dbReference>
<dbReference type="NCBIfam" id="TIGR01022">
    <property type="entry name" value="rpmJ_bact"/>
    <property type="match status" value="1"/>
</dbReference>
<dbReference type="PANTHER" id="PTHR42888">
    <property type="entry name" value="50S RIBOSOMAL PROTEIN L36, CHLOROPLASTIC"/>
    <property type="match status" value="1"/>
</dbReference>
<dbReference type="PANTHER" id="PTHR42888:SF1">
    <property type="entry name" value="LARGE RIBOSOMAL SUBUNIT PROTEIN BL36C"/>
    <property type="match status" value="1"/>
</dbReference>
<dbReference type="Pfam" id="PF00444">
    <property type="entry name" value="Ribosomal_L36"/>
    <property type="match status" value="1"/>
</dbReference>
<dbReference type="SUPFAM" id="SSF57840">
    <property type="entry name" value="Ribosomal protein L36"/>
    <property type="match status" value="1"/>
</dbReference>
<dbReference type="PROSITE" id="PS00828">
    <property type="entry name" value="RIBOSOMAL_L36"/>
    <property type="match status" value="1"/>
</dbReference>
<keyword id="KW-0002">3D-structure</keyword>
<keyword id="KW-1185">Reference proteome</keyword>
<keyword id="KW-0687">Ribonucleoprotein</keyword>
<keyword id="KW-0689">Ribosomal protein</keyword>